<comment type="function">
    <text>Hemocyanins are copper-containing oxygen carriers occurring freely dissolved in the hemolymph of many mollusks and arthropods.</text>
</comment>
<comment type="cofactor">
    <cofactor>
        <name>Cu(2+)</name>
        <dbReference type="ChEBI" id="CHEBI:29036"/>
    </cofactor>
    <text>Binds 2 copper ions per heterodimer.</text>
</comment>
<comment type="subunit">
    <text>Decamers of large identical subunits (350 kDa), each containing 7 globular oxygen-binding functional units: ODA, ODB, ODC, ODD, ODE, ODF, and ODG. Decamer formation requires the presence of magnesium ions.</text>
</comment>
<comment type="similarity">
    <text evidence="4">Belongs to the tyrosinase family. Hemocyanin subfamily.</text>
</comment>
<protein>
    <recommendedName>
        <fullName>Hemocyanin G-type, units Oda to Odg</fullName>
    </recommendedName>
</protein>
<name>HCYG_ENTDO</name>
<feature type="chain" id="PRO_0000204301" description="Hemocyanin G-type, units Oda to Odg">
    <location>
        <begin position="1"/>
        <end position="2896"/>
    </location>
</feature>
<feature type="region of interest" description="Functional unit Oda" evidence="5">
    <location>
        <begin position="1"/>
        <end position="419"/>
    </location>
</feature>
<feature type="region of interest" description="Functional unit Odb" evidence="5">
    <location>
        <begin position="420"/>
        <end position="834"/>
    </location>
</feature>
<feature type="region of interest" description="Functional unit Odc" evidence="5">
    <location>
        <begin position="835"/>
        <end position="1254"/>
    </location>
</feature>
<feature type="region of interest" description="Functional unit Odd" evidence="5">
    <location>
        <begin position="1255"/>
        <end position="1667"/>
    </location>
</feature>
<feature type="region of interest" description="Functional unit Ode" evidence="5">
    <location>
        <begin position="1668"/>
        <end position="2085"/>
    </location>
</feature>
<feature type="region of interest" description="Functional unit Odf" evidence="5">
    <location>
        <begin position="2086"/>
        <end position="2502"/>
    </location>
</feature>
<feature type="region of interest" description="Functional unit Odg" evidence="5">
    <location>
        <begin position="2503"/>
        <end position="2896"/>
    </location>
</feature>
<feature type="binding site" evidence="1">
    <location>
        <position position="41"/>
    </location>
    <ligand>
        <name>Cu cation</name>
        <dbReference type="ChEBI" id="CHEBI:23378"/>
        <label>A</label>
    </ligand>
</feature>
<feature type="binding site" evidence="1">
    <location>
        <position position="60"/>
    </location>
    <ligand>
        <name>Cu cation</name>
        <dbReference type="ChEBI" id="CHEBI:23378"/>
        <label>A</label>
    </ligand>
</feature>
<feature type="binding site" evidence="1">
    <location>
        <position position="69"/>
    </location>
    <ligand>
        <name>Cu cation</name>
        <dbReference type="ChEBI" id="CHEBI:23378"/>
        <label>A</label>
    </ligand>
</feature>
<feature type="binding site" evidence="1">
    <location>
        <position position="178"/>
    </location>
    <ligand>
        <name>Cu cation</name>
        <dbReference type="ChEBI" id="CHEBI:23378"/>
        <label>B</label>
    </ligand>
</feature>
<feature type="binding site" evidence="1">
    <location>
        <position position="182"/>
    </location>
    <ligand>
        <name>Cu cation</name>
        <dbReference type="ChEBI" id="CHEBI:23378"/>
        <label>B</label>
    </ligand>
</feature>
<feature type="binding site" evidence="1">
    <location>
        <position position="209"/>
    </location>
    <ligand>
        <name>Cu cation</name>
        <dbReference type="ChEBI" id="CHEBI:23378"/>
        <label>B</label>
    </ligand>
</feature>
<feature type="binding site" evidence="1">
    <location>
        <position position="460"/>
    </location>
    <ligand>
        <name>Cu cation</name>
        <dbReference type="ChEBI" id="CHEBI:23378"/>
        <label>A</label>
    </ligand>
</feature>
<feature type="binding site" evidence="1">
    <location>
        <position position="480"/>
    </location>
    <ligand>
        <name>Cu cation</name>
        <dbReference type="ChEBI" id="CHEBI:23378"/>
        <label>A</label>
    </ligand>
</feature>
<feature type="binding site" evidence="1">
    <location>
        <position position="489"/>
    </location>
    <ligand>
        <name>Cu cation</name>
        <dbReference type="ChEBI" id="CHEBI:23378"/>
        <label>A</label>
    </ligand>
</feature>
<feature type="binding site" evidence="1">
    <location>
        <position position="601"/>
    </location>
    <ligand>
        <name>Cu cation</name>
        <dbReference type="ChEBI" id="CHEBI:23378"/>
        <label>B</label>
    </ligand>
</feature>
<feature type="binding site" evidence="1">
    <location>
        <position position="605"/>
    </location>
    <ligand>
        <name>Cu cation</name>
        <dbReference type="ChEBI" id="CHEBI:23378"/>
        <label>B</label>
    </ligand>
</feature>
<feature type="binding site" evidence="1">
    <location>
        <position position="632"/>
    </location>
    <ligand>
        <name>Cu cation</name>
        <dbReference type="ChEBI" id="CHEBI:23378"/>
        <label>B</label>
    </ligand>
</feature>
<feature type="binding site" evidence="1">
    <location>
        <position position="875"/>
    </location>
    <ligand>
        <name>Cu cation</name>
        <dbReference type="ChEBI" id="CHEBI:23378"/>
        <label>A</label>
    </ligand>
</feature>
<feature type="binding site" evidence="1">
    <location>
        <position position="895"/>
    </location>
    <ligand>
        <name>Cu cation</name>
        <dbReference type="ChEBI" id="CHEBI:23378"/>
        <label>A</label>
    </ligand>
</feature>
<feature type="binding site" evidence="1">
    <location>
        <position position="904"/>
    </location>
    <ligand>
        <name>Cu cation</name>
        <dbReference type="ChEBI" id="CHEBI:23378"/>
        <label>A</label>
    </ligand>
</feature>
<feature type="binding site" evidence="1">
    <location>
        <position position="1013"/>
    </location>
    <ligand>
        <name>Cu cation</name>
        <dbReference type="ChEBI" id="CHEBI:23378"/>
        <label>B</label>
    </ligand>
</feature>
<feature type="binding site" evidence="1">
    <location>
        <position position="1017"/>
    </location>
    <ligand>
        <name>Cu cation</name>
        <dbReference type="ChEBI" id="CHEBI:23378"/>
        <label>B</label>
    </ligand>
</feature>
<feature type="binding site" evidence="1">
    <location>
        <position position="1044"/>
    </location>
    <ligand>
        <name>Cu cation</name>
        <dbReference type="ChEBI" id="CHEBI:23378"/>
        <label>B</label>
    </ligand>
</feature>
<feature type="binding site" evidence="1">
    <location>
        <position position="1292"/>
    </location>
    <ligand>
        <name>Cu cation</name>
        <dbReference type="ChEBI" id="CHEBI:23378"/>
        <label>A</label>
    </ligand>
</feature>
<feature type="binding site" evidence="1">
    <location>
        <position position="1312"/>
    </location>
    <ligand>
        <name>Cu cation</name>
        <dbReference type="ChEBI" id="CHEBI:23378"/>
        <label>A</label>
    </ligand>
</feature>
<feature type="binding site" evidence="1">
    <location>
        <position position="1321"/>
    </location>
    <ligand>
        <name>Cu cation</name>
        <dbReference type="ChEBI" id="CHEBI:23378"/>
        <label>A</label>
    </ligand>
</feature>
<feature type="binding site" evidence="1">
    <location>
        <position position="1425"/>
    </location>
    <ligand>
        <name>Cu cation</name>
        <dbReference type="ChEBI" id="CHEBI:23378"/>
        <label>B</label>
    </ligand>
</feature>
<feature type="binding site" evidence="1">
    <location>
        <position position="1429"/>
    </location>
    <ligand>
        <name>Cu cation</name>
        <dbReference type="ChEBI" id="CHEBI:23378"/>
        <label>B</label>
    </ligand>
</feature>
<feature type="binding site" evidence="1">
    <location>
        <position position="1456"/>
    </location>
    <ligand>
        <name>Cu cation</name>
        <dbReference type="ChEBI" id="CHEBI:23378"/>
        <label>B</label>
    </ligand>
</feature>
<feature type="binding site" evidence="1">
    <location>
        <position position="1708"/>
    </location>
    <ligand>
        <name>Cu cation</name>
        <dbReference type="ChEBI" id="CHEBI:23378"/>
        <label>A</label>
    </ligand>
</feature>
<feature type="binding site" evidence="1">
    <location>
        <position position="1728"/>
    </location>
    <ligand>
        <name>Cu cation</name>
        <dbReference type="ChEBI" id="CHEBI:23378"/>
        <label>A</label>
    </ligand>
</feature>
<feature type="binding site" evidence="1">
    <location>
        <position position="1737"/>
    </location>
    <ligand>
        <name>Cu cation</name>
        <dbReference type="ChEBI" id="CHEBI:23378"/>
        <label>A</label>
    </ligand>
</feature>
<feature type="binding site" evidence="1">
    <location>
        <position position="1849"/>
    </location>
    <ligand>
        <name>Cu cation</name>
        <dbReference type="ChEBI" id="CHEBI:23378"/>
        <label>B</label>
    </ligand>
</feature>
<feature type="binding site" evidence="1">
    <location>
        <position position="1853"/>
    </location>
    <ligand>
        <name>Cu cation</name>
        <dbReference type="ChEBI" id="CHEBI:23378"/>
        <label>B</label>
    </ligand>
</feature>
<feature type="binding site" evidence="1">
    <location>
        <position position="1880"/>
    </location>
    <ligand>
        <name>Cu cation</name>
        <dbReference type="ChEBI" id="CHEBI:23378"/>
        <label>B</label>
    </ligand>
</feature>
<feature type="binding site" evidence="1">
    <location>
        <position position="2126"/>
    </location>
    <ligand>
        <name>Cu cation</name>
        <dbReference type="ChEBI" id="CHEBI:23378"/>
        <label>A</label>
    </ligand>
</feature>
<feature type="binding site" evidence="1">
    <location>
        <position position="2144"/>
    </location>
    <ligand>
        <name>Cu cation</name>
        <dbReference type="ChEBI" id="CHEBI:23378"/>
        <label>A</label>
    </ligand>
</feature>
<feature type="binding site" evidence="1">
    <location>
        <position position="2153"/>
    </location>
    <ligand>
        <name>Cu cation</name>
        <dbReference type="ChEBI" id="CHEBI:23378"/>
        <label>A</label>
    </ligand>
</feature>
<feature type="binding site" evidence="1">
    <location>
        <position position="2262"/>
    </location>
    <ligand>
        <name>Cu cation</name>
        <dbReference type="ChEBI" id="CHEBI:23378"/>
        <label>B</label>
    </ligand>
</feature>
<feature type="binding site" evidence="1">
    <location>
        <position position="2266"/>
    </location>
    <ligand>
        <name>Cu cation</name>
        <dbReference type="ChEBI" id="CHEBI:23378"/>
        <label>B</label>
    </ligand>
</feature>
<feature type="binding site" evidence="1">
    <location>
        <position position="2293"/>
    </location>
    <ligand>
        <name>Cu cation</name>
        <dbReference type="ChEBI" id="CHEBI:23378"/>
        <label>B</label>
    </ligand>
</feature>
<feature type="binding site" evidence="6">
    <location>
        <position position="2543"/>
    </location>
    <ligand>
        <name>Cu cation</name>
        <dbReference type="ChEBI" id="CHEBI:23378"/>
        <label>A</label>
    </ligand>
</feature>
<feature type="binding site" evidence="6">
    <location>
        <position position="2562"/>
    </location>
    <ligand>
        <name>Cu cation</name>
        <dbReference type="ChEBI" id="CHEBI:23378"/>
        <label>A</label>
    </ligand>
</feature>
<feature type="binding site" evidence="6">
    <location>
        <position position="2571"/>
    </location>
    <ligand>
        <name>Cu cation</name>
        <dbReference type="ChEBI" id="CHEBI:23378"/>
        <label>A</label>
    </ligand>
</feature>
<feature type="binding site" evidence="6">
    <location>
        <position position="2671"/>
    </location>
    <ligand>
        <name>Cu cation</name>
        <dbReference type="ChEBI" id="CHEBI:23378"/>
        <label>B</label>
    </ligand>
</feature>
<feature type="binding site" evidence="6">
    <location>
        <position position="2675"/>
    </location>
    <ligand>
        <name>Cu cation</name>
        <dbReference type="ChEBI" id="CHEBI:23378"/>
        <label>B</label>
    </ligand>
</feature>
<feature type="binding site" evidence="6">
    <location>
        <position position="2702"/>
    </location>
    <ligand>
        <name>Cu cation</name>
        <dbReference type="ChEBI" id="CHEBI:23378"/>
        <label>B</label>
    </ligand>
</feature>
<feature type="glycosylation site" description="N-linked (GlcNAc...) asparagine" evidence="2">
    <location>
        <position position="386"/>
    </location>
</feature>
<feature type="glycosylation site" description="N-linked (GlcNAc...) asparagine" evidence="2">
    <location>
        <position position="804"/>
    </location>
</feature>
<feature type="glycosylation site" description="N-linked (GlcNAc...) asparagine" evidence="2">
    <location>
        <position position="1496"/>
    </location>
</feature>
<feature type="glycosylation site" description="N-linked (GlcNAc...) asparagine" evidence="2">
    <location>
        <position position="1634"/>
    </location>
</feature>
<feature type="glycosylation site" description="N-linked (GlcNAc...) asparagine" evidence="2">
    <location>
        <position position="2055"/>
    </location>
</feature>
<feature type="glycosylation site" description="N-linked (GlcNAc...) asparagine" evidence="2">
    <location>
        <position position="2201"/>
    </location>
</feature>
<feature type="glycosylation site" description="N-linked (GlcNAc...) asparagine">
    <location>
        <position position="2553"/>
    </location>
</feature>
<feature type="disulfide bond" evidence="1">
    <location>
        <begin position="47"/>
        <end position="57"/>
    </location>
</feature>
<feature type="disulfide bond" evidence="1">
    <location>
        <begin position="168"/>
        <end position="234"/>
    </location>
</feature>
<feature type="disulfide bond" evidence="1">
    <location>
        <begin position="321"/>
        <end position="333"/>
    </location>
</feature>
<feature type="disulfide bond" evidence="1">
    <location>
        <begin position="466"/>
        <end position="477"/>
    </location>
</feature>
<feature type="disulfide bond" evidence="1">
    <location>
        <begin position="591"/>
        <end position="657"/>
    </location>
</feature>
<feature type="disulfide bond" evidence="1">
    <location>
        <begin position="881"/>
        <end position="892"/>
    </location>
</feature>
<feature type="disulfide bond" evidence="1">
    <location>
        <begin position="1003"/>
        <end position="1070"/>
    </location>
</feature>
<feature type="disulfide bond" evidence="1">
    <location>
        <begin position="1298"/>
        <end position="1309"/>
    </location>
</feature>
<feature type="disulfide bond" evidence="1">
    <location>
        <begin position="1415"/>
        <end position="1482"/>
    </location>
</feature>
<feature type="disulfide bond" evidence="1">
    <location>
        <begin position="1571"/>
        <end position="1581"/>
    </location>
</feature>
<feature type="disulfide bond" evidence="1">
    <location>
        <begin position="1714"/>
        <end position="1725"/>
    </location>
</feature>
<feature type="disulfide bond" evidence="1">
    <location>
        <begin position="1839"/>
        <end position="1906"/>
    </location>
</feature>
<feature type="disulfide bond" evidence="1">
    <location>
        <begin position="1997"/>
        <end position="2003"/>
    </location>
</feature>
<feature type="disulfide bond" evidence="1">
    <location>
        <begin position="2131"/>
        <end position="2141"/>
    </location>
</feature>
<feature type="disulfide bond" evidence="1">
    <location>
        <begin position="2252"/>
        <end position="2319"/>
    </location>
</feature>
<feature type="disulfide bond" evidence="1">
    <location>
        <begin position="2406"/>
        <end position="2411"/>
    </location>
</feature>
<feature type="disulfide bond" evidence="3 6">
    <location>
        <begin position="2549"/>
        <end position="2559"/>
    </location>
</feature>
<feature type="disulfide bond" evidence="3 6">
    <location>
        <begin position="2661"/>
        <end position="2728"/>
    </location>
</feature>
<feature type="disulfide bond" evidence="3 6">
    <location>
        <begin position="2815"/>
        <end position="2821"/>
    </location>
</feature>
<feature type="cross-link" description="2'-(S-cysteinyl)-histidine (Cys-His)" evidence="1">
    <location>
        <begin position="58"/>
        <end position="60"/>
    </location>
</feature>
<feature type="cross-link" description="2'-(S-cysteinyl)-histidine (Cys-His)" evidence="1">
    <location>
        <begin position="478"/>
        <end position="480"/>
    </location>
</feature>
<feature type="cross-link" description="2'-(S-cysteinyl)-histidine (Cys-His)" evidence="1">
    <location>
        <begin position="893"/>
        <end position="895"/>
    </location>
</feature>
<feature type="cross-link" description="2'-(S-cysteinyl)-histidine (Cys-His)" evidence="1">
    <location>
        <begin position="1310"/>
        <end position="1312"/>
    </location>
</feature>
<feature type="cross-link" description="2'-(S-cysteinyl)-histidine (Cys-His)" evidence="1">
    <location>
        <begin position="1726"/>
        <end position="1728"/>
    </location>
</feature>
<feature type="cross-link" description="2'-(S-cysteinyl)-histidine (Cys-His)" evidence="1">
    <location>
        <begin position="2142"/>
        <end position="2144"/>
    </location>
</feature>
<feature type="cross-link" description="2'-(S-cysteinyl)-histidine (Cys-His)">
    <location>
        <begin position="2560"/>
        <end position="2562"/>
    </location>
</feature>
<feature type="strand" evidence="7">
    <location>
        <begin position="2504"/>
        <end position="2506"/>
    </location>
</feature>
<feature type="helix" evidence="7">
    <location>
        <begin position="2509"/>
        <end position="2511"/>
    </location>
</feature>
<feature type="helix" evidence="7">
    <location>
        <begin position="2514"/>
        <end position="2529"/>
    </location>
</feature>
<feature type="helix" evidence="7">
    <location>
        <begin position="2536"/>
        <end position="2540"/>
    </location>
</feature>
<feature type="turn" evidence="7">
    <location>
        <begin position="2541"/>
        <end position="2543"/>
    </location>
</feature>
<feature type="strand" evidence="7">
    <location>
        <begin position="2544"/>
        <end position="2546"/>
    </location>
</feature>
<feature type="helix" evidence="7">
    <location>
        <begin position="2567"/>
        <end position="2584"/>
    </location>
</feature>
<feature type="helix" evidence="7">
    <location>
        <begin position="2605"/>
        <end position="2608"/>
    </location>
</feature>
<feature type="turn" evidence="7">
    <location>
        <begin position="2621"/>
        <end position="2624"/>
    </location>
</feature>
<feature type="helix" evidence="7">
    <location>
        <begin position="2633"/>
        <end position="2635"/>
    </location>
</feature>
<feature type="helix" evidence="7">
    <location>
        <begin position="2646"/>
        <end position="2656"/>
    </location>
</feature>
<feature type="helix" evidence="7">
    <location>
        <begin position="2660"/>
        <end position="2679"/>
    </location>
</feature>
<feature type="turn" evidence="7">
    <location>
        <begin position="2689"/>
        <end position="2691"/>
    </location>
</feature>
<feature type="helix" evidence="7">
    <location>
        <begin position="2692"/>
        <end position="2694"/>
    </location>
</feature>
<feature type="helix" evidence="7">
    <location>
        <begin position="2697"/>
        <end position="2719"/>
    </location>
</feature>
<feature type="strand" evidence="7">
    <location>
        <begin position="2727"/>
        <end position="2729"/>
    </location>
</feature>
<feature type="helix" evidence="7">
    <location>
        <begin position="2732"/>
        <end position="2734"/>
    </location>
</feature>
<feature type="turn" evidence="7">
    <location>
        <begin position="2738"/>
        <end position="2741"/>
    </location>
</feature>
<feature type="helix" evidence="7">
    <location>
        <begin position="2748"/>
        <end position="2752"/>
    </location>
</feature>
<feature type="helix" evidence="7">
    <location>
        <begin position="2756"/>
        <end position="2758"/>
    </location>
</feature>
<feature type="helix" evidence="7">
    <location>
        <begin position="2762"/>
        <end position="2765"/>
    </location>
</feature>
<feature type="strand" evidence="7">
    <location>
        <begin position="2767"/>
        <end position="2770"/>
    </location>
</feature>
<feature type="helix" evidence="7">
    <location>
        <begin position="2779"/>
        <end position="2789"/>
    </location>
</feature>
<feature type="strand" evidence="7">
    <location>
        <begin position="2794"/>
        <end position="2799"/>
    </location>
</feature>
<feature type="strand" evidence="7">
    <location>
        <begin position="2808"/>
        <end position="2816"/>
    </location>
</feature>
<feature type="strand" evidence="7">
    <location>
        <begin position="2821"/>
        <end position="2829"/>
    </location>
</feature>
<feature type="strand" evidence="7">
    <location>
        <begin position="2844"/>
        <end position="2847"/>
    </location>
</feature>
<feature type="helix" evidence="7">
    <location>
        <begin position="2849"/>
        <end position="2854"/>
    </location>
</feature>
<feature type="strand" evidence="7">
    <location>
        <begin position="2863"/>
        <end position="2874"/>
    </location>
</feature>
<feature type="helix" evidence="7">
    <location>
        <begin position="2879"/>
        <end position="2881"/>
    </location>
</feature>
<feature type="strand" evidence="7">
    <location>
        <begin position="2886"/>
        <end position="2890"/>
    </location>
</feature>
<accession>O61363</accession>
<sequence>NLIRKDVDALSEDEVLNLQVALRAMQDDETPTGYQAIAAYHGEPADCKAPDGSTVVCCLHGMPTFPLWHRLYTVQFEQTMVAHGSKLGVPYWDWTQPLNHLPELVSHPLFMDPTAHKAKKNVFYSGDIAFEKKTTARAVDTRLFQASKGGKNFLLEGVLSALEQDDYCHFEVQFEVAHNPIHYLVGGRFTHSMSSLEYTSYDPLFFLHHSNVERLFTIWQALQKHRGLDGNANCGLNMFHKPMEPFGRDTNPISLTKEHAKAVDVFNYNELGYDYDDLHLNGMDIPELDTMLKERQQHPRSFANFRLGGIKTSANVRVAVCIPSEDKRHSDNCNNHVGSFFILGGVHEMTWDFGYPFLFEITDVVKSLGIPLDGNYYVHADVTEINGTLLPDGTIPRPTVSYIPHNFKDADMVVVDKTGLNVRKDLQSLTTEEEYELRVAMERFMDDKSIDGYQALAEFHGLPAKCPEPDAINRVACCVHGMSTFPHWHRLVVMQFEDALLARGSPIGVPYWDWTTPSSSLPHLVAVETYEDPYTKEVKPNPFYHAQIEFLHNDVFTARNVDSRLFEKPTKGHHGYLHDGMLLAFEQEDFCDFEVQFEVTHNAIHAWVGGNEPYSMSSLHYTSFDPLFWLHHSQVDRLWAVWQALQIYRGKPYKPYCALSEVHRPLKPFAFEPPLNNNKHTHSHSVPTHVYDYQSDLHYTYDTLFFGGMSVRELQRHIEEDKAKDRVFVGFLLMGIKTSANVVINVESAGNTYMAGTITILGGSKEMEWRFDRLYKYEITDALAELGVDMHAEYSINLQINDINGTALPPTSIPDPIVIFSPGKKESGVVFDELYRSRRDVSSLTDADMNALRKALQAYEDDKDASGYQQVAAFHGSTKWCPSPDAEVKYACCHHGMATFPHWHRLLTVNFENGLRHNGYQNGIPYWDWTRPLSELPTLVKDETYADENGETHPNPFFSGVIDEIGEHTTRSPNPTLFLKPPFGHFTPLGDEVMYALEQEDFCSFEVQFEIAHNHIHALVGGTEPYSMSSLEYTTFDPIFILHHSNVDRIWAIWQALQKFRGHRYNSANCAIETLRKPMSPFSLTSDINIDPMTREHSVPFDVFDYKKNFHYEYDLLELNGLSIPQLHREISRRRAKSRIFATFMLEGIKQSALVEYYIRAHGSTDQLKAGEFYILGSANEMPWKFDRVYKADITQQMKEANLHFNDQYHIEYHLKDLSGNEIAGVHLETAIIYEPGLGNFGEAGIWVEPVTSANRIRKNLNALTDGDMESLRKAFKDMTTDGRYEEIASFHGLPAQCPNKDGSKVYTCCIHGMPTFPHWHRLYVALVENELLARGSGVAVPYWDWVQPFDHLPALVNRATYYNSRTLLVEPNPFFKGKISFLNSETNRDPQEELFGNKYLYEHTLFVLEQTDFCDFEVHFEVLHNTIHSWLGGRDPHSMSSLDFAAYDPIFFLHHSNIDRIWAIWQELQRYRKLPYNEANCALPLLNVPMRPFSNTTANHDRMTLTHSAPNDVFDYQNVLHYKYDTLSFYDLTITQLDHLIEERKSHDRIFAGFLLHGVQASADIHVFICVPTSKHEENCAHDVGVFSVLGGKSEMPWQFASVFQYEITDQLKLLGLNQNSHFRGVTEVTAVNGSSINSDIFPHPTIIYVPKQDHSADIKSEEGNEYLVRKNVERLSLSEMNSLIHAFRRMQRDKSSDGFEAIASFHALPPLCPSPTAKHRHACCLHGMATFPHWHRLYVVQFEQALHRHGATVGVPYWDWTRPISKIPDFIASKRYSDPFTKIEDYNPFNQGQISFISEDTETKREVSEYLFEHPVLGKQTWLFDNIALALEQTDYCDFEIQLEIVHNAIHSWIGGKEEHSLNHLHYAAYDPIFYLHHSNVDRLWVIWQELQKLRGLNAYESHCALELMKVPLKPFSFGAPYNLNDLTTKLSKPEDMFRYKDNFHYEYDILDINSMSINQIESSYIRHQRDHDRVFAGFLLSGFGSSAYATFEICIEGGECHEGSHFSVLGGSTEMPWAFDRLYKIEITDILSDMNLAFDSAFTIKTKLVAQNGTELPASILPEATVIRIPPSNEDADIDTPLNHIRRNVESLDERDIQNLMAALTRVKEDESDHGFQTIASYHGSTLCPSPEEPKYACCLHGMPVFPHWHRVYLLHFEDSMRRHGSSVATPYWDWTQPGTKLPRLLADSDYYDAWTDNVTENPFLRGYIKTEDTYTVRDVKPELFEIGGGEGSTLYQQVLLMLEQEDYCDFEVQFEVVHNSIHYLVGGHQKYAMSSLVYSSFDPIFYVHHSMVDRLWAIWQALQEHRHLPFDKAYCALEQLSFPMKPFVWESNPNLHTRAASTPQHLFDDNKLGYKYDNLEFHGMNIDQLENAIHKQQNKDRVFASFLLFGIKTSADVHLKLCKDETCEDAGVVFILGGDNEMPWHFDRTYKKDITHVLHQMHIPLEDLYVHGSTILLEVEIETVDGKVLDSSSLPAPSMIYVPAKDFKREVHKKTVGDAIIRKNVNSLTPSDIKELRDAMAKVQADTSDNGYQKIASYHGIPLSCHYENGTAYACCQHGMVTFPNWHRLLTKQMEDALVAKGSHVGIPYWDWTTTFANLPVLVTEEKDNSFHHAHIDVANTDTTRSPRAQLFDDPDKGDKSFFYRQIALALEQTDFCDFEIQFEIGHNAIHSWVGGSSPYGMSTLHYTSYDPLFYLHHSNTDRIWSVWQALQKYRGLPYNTANCEINKLVKPLKPFNLDTNPNAVTKAHSTGATSFDYHKLGYDYDNLNFHGMTIPELEEHLKEIQHEDRVFAGFLLRTIGQSADVNFDVCTKDGECTFGGTFCILGGEHEMFWAFDRPFKYDITTSLKHLRLDAHDDFDIKVTIKGIDGHVLSNKYLSPPTVFLAPAKTTH</sequence>
<evidence type="ECO:0000250" key="1"/>
<evidence type="ECO:0000255" key="2"/>
<evidence type="ECO:0000269" key="3">
    <source>
    </source>
</evidence>
<evidence type="ECO:0000305" key="4"/>
<evidence type="ECO:0000305" key="5">
    <source>
    </source>
</evidence>
<evidence type="ECO:0007744" key="6">
    <source>
        <dbReference type="PDB" id="1JS8"/>
    </source>
</evidence>
<evidence type="ECO:0007829" key="7">
    <source>
        <dbReference type="PDB" id="1JS8"/>
    </source>
</evidence>
<proteinExistence type="evidence at protein level"/>
<dbReference type="EMBL" id="AF020548">
    <property type="protein sequence ID" value="AAC39018.1"/>
    <property type="molecule type" value="mRNA"/>
</dbReference>
<dbReference type="PIR" id="S13442">
    <property type="entry name" value="S13442"/>
</dbReference>
<dbReference type="PIR" id="T30939">
    <property type="entry name" value="T30939"/>
</dbReference>
<dbReference type="PDB" id="1JS8">
    <property type="method" value="X-ray"/>
    <property type="resolution" value="2.30 A"/>
    <property type="chains" value="A/B=2503-2896"/>
</dbReference>
<dbReference type="PDBsum" id="1JS8"/>
<dbReference type="SMR" id="O61363"/>
<dbReference type="GlyCosmos" id="O61363">
    <property type="glycosylation" value="7 sites, No reported glycans"/>
</dbReference>
<dbReference type="EvolutionaryTrace" id="O61363"/>
<dbReference type="GO" id="GO:0046872">
    <property type="term" value="F:metal ion binding"/>
    <property type="evidence" value="ECO:0007669"/>
    <property type="project" value="UniProtKB-KW"/>
</dbReference>
<dbReference type="GO" id="GO:0016491">
    <property type="term" value="F:oxidoreductase activity"/>
    <property type="evidence" value="ECO:0007669"/>
    <property type="project" value="InterPro"/>
</dbReference>
<dbReference type="GO" id="GO:0005344">
    <property type="term" value="F:oxygen carrier activity"/>
    <property type="evidence" value="ECO:0007669"/>
    <property type="project" value="UniProtKB-KW"/>
</dbReference>
<dbReference type="Gene3D" id="1.10.1280.10">
    <property type="entry name" value="Di-copper center containing domain from catechol oxidase"/>
    <property type="match status" value="7"/>
</dbReference>
<dbReference type="Gene3D" id="2.60.310.10">
    <property type="entry name" value="Haemocyanin C-terminal domain"/>
    <property type="match status" value="7"/>
</dbReference>
<dbReference type="InterPro" id="IPR008922">
    <property type="entry name" value="Di-copper_centre_dom_sf"/>
</dbReference>
<dbReference type="InterPro" id="IPR028999">
    <property type="entry name" value="Haemocyanin_beta-sandwich"/>
</dbReference>
<dbReference type="InterPro" id="IPR036848">
    <property type="entry name" value="Haemocyanin_C_sf"/>
</dbReference>
<dbReference type="InterPro" id="IPR050316">
    <property type="entry name" value="Tyrosinase/Hemocyanin"/>
</dbReference>
<dbReference type="InterPro" id="IPR002227">
    <property type="entry name" value="Tyrosinase_Cu-bd"/>
</dbReference>
<dbReference type="PANTHER" id="PTHR11474:SF76">
    <property type="entry name" value="SHKT DOMAIN-CONTAINING PROTEIN"/>
    <property type="match status" value="1"/>
</dbReference>
<dbReference type="PANTHER" id="PTHR11474">
    <property type="entry name" value="TYROSINASE FAMILY MEMBER"/>
    <property type="match status" value="1"/>
</dbReference>
<dbReference type="Pfam" id="PF14830">
    <property type="entry name" value="Haemocyan_bet_s"/>
    <property type="match status" value="7"/>
</dbReference>
<dbReference type="Pfam" id="PF00264">
    <property type="entry name" value="Tyrosinase"/>
    <property type="match status" value="7"/>
</dbReference>
<dbReference type="PRINTS" id="PR00092">
    <property type="entry name" value="TYROSINASE"/>
</dbReference>
<dbReference type="SUPFAM" id="SSF81277">
    <property type="entry name" value="C-terminal domain of mollusc hemocyanin"/>
    <property type="match status" value="7"/>
</dbReference>
<dbReference type="SUPFAM" id="SSF48056">
    <property type="entry name" value="Di-copper centre-containing domain"/>
    <property type="match status" value="7"/>
</dbReference>
<dbReference type="PROSITE" id="PS00497">
    <property type="entry name" value="TYROSINASE_1"/>
    <property type="match status" value="7"/>
</dbReference>
<dbReference type="PROSITE" id="PS00498">
    <property type="entry name" value="TYROSINASE_2"/>
    <property type="match status" value="6"/>
</dbReference>
<reference key="1">
    <citation type="journal article" date="1998" name="J. Mol. Biol.">
        <title>Sequence of the Octopus dofleini hemocyanin subunit: structural and evolutionary implications.</title>
        <authorList>
            <person name="Miller K.I."/>
            <person name="Cuff M.E."/>
            <person name="Lang W.F."/>
            <person name="Varga-Weisz P."/>
            <person name="Field K.G."/>
            <person name="van Holde K.E."/>
        </authorList>
    </citation>
    <scope>NUCLEOTIDE SEQUENCE [MRNA]</scope>
    <scope>CHARACTERIZATION</scope>
    <source>
        <tissue>Branchial gland</tissue>
    </source>
</reference>
<reference key="2">
    <citation type="journal article" date="1998" name="J. Mol. Biol.">
        <title>Crystal structure of a functional unit from Octopus hemocyanin.</title>
        <authorList>
            <person name="Cuff M.E."/>
            <person name="Miller K.I."/>
            <person name="van Holde K.E."/>
            <person name="Hendrickson W.A."/>
        </authorList>
    </citation>
    <scope>X-RAY CRYSTALLOGRAPHY (2.3 ANGSTROMS) OF SUBUNIT ODG IN COMPLEX WITH COPPER</scope>
    <scope>DISULFIDE BOND</scope>
</reference>
<organism>
    <name type="scientific">Enteroctopus dofleini</name>
    <name type="common">North Pacific giant octopus</name>
    <name type="synonym">Octopus dofleini</name>
    <dbReference type="NCBI Taxonomy" id="267067"/>
    <lineage>
        <taxon>Eukaryota</taxon>
        <taxon>Metazoa</taxon>
        <taxon>Spiralia</taxon>
        <taxon>Lophotrochozoa</taxon>
        <taxon>Mollusca</taxon>
        <taxon>Cephalopoda</taxon>
        <taxon>Coleoidea</taxon>
        <taxon>Octopodiformes</taxon>
        <taxon>Octopoda</taxon>
        <taxon>Incirrata</taxon>
        <taxon>Octopodidae</taxon>
        <taxon>Enteroctopus</taxon>
    </lineage>
</organism>
<keyword id="KW-0002">3D-structure</keyword>
<keyword id="KW-0186">Copper</keyword>
<keyword id="KW-1015">Disulfide bond</keyword>
<keyword id="KW-0325">Glycoprotein</keyword>
<keyword id="KW-0479">Metal-binding</keyword>
<keyword id="KW-0561">Oxygen transport</keyword>
<keyword id="KW-0677">Repeat</keyword>
<keyword id="KW-0883">Thioether bond</keyword>
<keyword id="KW-0813">Transport</keyword>
<gene>
    <name type="primary">ODHCY</name>
</gene>